<accession>Q32LM5</accession>
<keyword id="KW-0496">Mitochondrion</keyword>
<keyword id="KW-1185">Reference proteome</keyword>
<keyword id="KW-0809">Transit peptide</keyword>
<organism>
    <name type="scientific">Bos taurus</name>
    <name type="common">Bovine</name>
    <dbReference type="NCBI Taxonomy" id="9913"/>
    <lineage>
        <taxon>Eukaryota</taxon>
        <taxon>Metazoa</taxon>
        <taxon>Chordata</taxon>
        <taxon>Craniata</taxon>
        <taxon>Vertebrata</taxon>
        <taxon>Euteleostomi</taxon>
        <taxon>Mammalia</taxon>
        <taxon>Eutheria</taxon>
        <taxon>Laurasiatheria</taxon>
        <taxon>Artiodactyla</taxon>
        <taxon>Ruminantia</taxon>
        <taxon>Pecora</taxon>
        <taxon>Bovidae</taxon>
        <taxon>Bovinae</taxon>
        <taxon>Bos</taxon>
    </lineage>
</organism>
<proteinExistence type="inferred from homology"/>
<feature type="transit peptide" description="Mitochondrion" evidence="2">
    <location>
        <begin position="1"/>
        <end position="19"/>
    </location>
</feature>
<feature type="chain" id="PRO_0000251174" description="LYR motif-containing protein 2">
    <location>
        <begin position="20"/>
        <end position="88"/>
    </location>
</feature>
<dbReference type="EMBL" id="BC109510">
    <property type="protein sequence ID" value="AAI09511.1"/>
    <property type="molecule type" value="mRNA"/>
</dbReference>
<dbReference type="RefSeq" id="NP_001106781.1">
    <property type="nucleotide sequence ID" value="NM_001113310.1"/>
</dbReference>
<dbReference type="SMR" id="Q32LM5"/>
<dbReference type="FunCoup" id="Q32LM5">
    <property type="interactions" value="2080"/>
</dbReference>
<dbReference type="STRING" id="9913.ENSBTAP00000067244"/>
<dbReference type="PaxDb" id="9913-ENSBTAP00000037698"/>
<dbReference type="GeneID" id="615821"/>
<dbReference type="KEGG" id="bta:615821"/>
<dbReference type="CTD" id="57226"/>
<dbReference type="VEuPathDB" id="HostDB:ENSBTAG00000026604"/>
<dbReference type="eggNOG" id="ENOG502S8DG">
    <property type="taxonomic scope" value="Eukaryota"/>
</dbReference>
<dbReference type="HOGENOM" id="CLU_151409_1_1_1"/>
<dbReference type="InParanoid" id="Q32LM5"/>
<dbReference type="OMA" id="YMRDWAR"/>
<dbReference type="OrthoDB" id="74240at2759"/>
<dbReference type="TreeFam" id="TF323797"/>
<dbReference type="Reactome" id="R-BTA-6799198">
    <property type="pathway name" value="Complex I biogenesis"/>
</dbReference>
<dbReference type="Proteomes" id="UP000009136">
    <property type="component" value="Chromosome 9"/>
</dbReference>
<dbReference type="Bgee" id="ENSBTAG00000026604">
    <property type="expression patterns" value="Expressed in semen and 108 other cell types or tissues"/>
</dbReference>
<dbReference type="GO" id="GO:0005739">
    <property type="term" value="C:mitochondrion"/>
    <property type="evidence" value="ECO:0000318"/>
    <property type="project" value="GO_Central"/>
</dbReference>
<dbReference type="GO" id="GO:0032981">
    <property type="term" value="P:mitochondrial respiratory chain complex I assembly"/>
    <property type="evidence" value="ECO:0000250"/>
    <property type="project" value="UniProtKB"/>
</dbReference>
<dbReference type="CDD" id="cd20262">
    <property type="entry name" value="Complex1_LYR_LYRM2"/>
    <property type="match status" value="1"/>
</dbReference>
<dbReference type="InterPro" id="IPR008011">
    <property type="entry name" value="Complex1_LYR_dom"/>
</dbReference>
<dbReference type="InterPro" id="IPR045293">
    <property type="entry name" value="Complex1_LYR_LYRM2"/>
</dbReference>
<dbReference type="PANTHER" id="PTHR13675">
    <property type="entry name" value="LYR MOTIF-CONTAINING PROTEIN 2"/>
    <property type="match status" value="1"/>
</dbReference>
<dbReference type="PANTHER" id="PTHR13675:SF3">
    <property type="entry name" value="LYR MOTIF-CONTAINING PROTEIN 2"/>
    <property type="match status" value="1"/>
</dbReference>
<dbReference type="Pfam" id="PF05347">
    <property type="entry name" value="Complex1_LYR"/>
    <property type="match status" value="1"/>
</dbReference>
<comment type="function">
    <text evidence="1">Involved in efficient integration of the N-module into mitochondrial respiratory chain complex I.</text>
</comment>
<comment type="subcellular location">
    <subcellularLocation>
        <location evidence="1">Mitochondrion</location>
    </subcellularLocation>
</comment>
<comment type="similarity">
    <text evidence="3">Belongs to the complex I LYR family.</text>
</comment>
<protein>
    <recommendedName>
        <fullName>LYR motif-containing protein 2</fullName>
    </recommendedName>
</protein>
<gene>
    <name type="primary">LYRM2</name>
</gene>
<name>LYRM2_BOVIN</name>
<sequence length="88" mass="10481">MATSRLPPATLTLKQFMRRQQVLLLYRRILQAIRQVPNDSDRKYLKDWAREEFKRNKSATEEDTIRMMITQGNMQLKELEKTLALARS</sequence>
<evidence type="ECO:0000250" key="1">
    <source>
        <dbReference type="UniProtKB" id="Q9NU23"/>
    </source>
</evidence>
<evidence type="ECO:0000255" key="2"/>
<evidence type="ECO:0000305" key="3"/>
<reference key="1">
    <citation type="submission" date="2005-11" db="EMBL/GenBank/DDBJ databases">
        <authorList>
            <consortium name="NIH - Mammalian Gene Collection (MGC) project"/>
        </authorList>
    </citation>
    <scope>NUCLEOTIDE SEQUENCE [LARGE SCALE MRNA]</scope>
    <source>
        <strain>Crossbred X Angus</strain>
        <tissue>Liver</tissue>
    </source>
</reference>